<name>TRPG1_HALMA</name>
<proteinExistence type="inferred from homology"/>
<comment type="catalytic activity">
    <reaction>
        <text>chorismate + L-glutamine = anthranilate + pyruvate + L-glutamate + H(+)</text>
        <dbReference type="Rhea" id="RHEA:21732"/>
        <dbReference type="ChEBI" id="CHEBI:15361"/>
        <dbReference type="ChEBI" id="CHEBI:15378"/>
        <dbReference type="ChEBI" id="CHEBI:16567"/>
        <dbReference type="ChEBI" id="CHEBI:29748"/>
        <dbReference type="ChEBI" id="CHEBI:29985"/>
        <dbReference type="ChEBI" id="CHEBI:58359"/>
        <dbReference type="EC" id="4.1.3.27"/>
    </reaction>
</comment>
<comment type="pathway">
    <text>Amino-acid biosynthesis; L-tryptophan biosynthesis; L-tryptophan from chorismate: step 1/5.</text>
</comment>
<comment type="subunit">
    <text evidence="1">Tetramer of two components I and two components II.</text>
</comment>
<comment type="miscellaneous">
    <text>Component I catalyzes the formation of anthranilate using ammonia rather than glutamine, whereas component II provides glutamine amidotransferase activity.</text>
</comment>
<protein>
    <recommendedName>
        <fullName>Anthranilate synthase component II</fullName>
        <ecNumber>4.1.3.27</ecNumber>
    </recommendedName>
</protein>
<dbReference type="EC" id="4.1.3.27"/>
<dbReference type="EMBL" id="AY596297">
    <property type="protein sequence ID" value="AAV46438.1"/>
    <property type="molecule type" value="Genomic_DNA"/>
</dbReference>
<dbReference type="SMR" id="Q5V214"/>
<dbReference type="STRING" id="272569.rrnAC1517"/>
<dbReference type="MEROPS" id="C26.959"/>
<dbReference type="PaxDb" id="272569-rrnAC1517"/>
<dbReference type="EnsemblBacteria" id="AAV46438">
    <property type="protein sequence ID" value="AAV46438"/>
    <property type="gene ID" value="rrnAC1517"/>
</dbReference>
<dbReference type="KEGG" id="hma:rrnAC1517"/>
<dbReference type="PATRIC" id="fig|272569.17.peg.2206"/>
<dbReference type="eggNOG" id="arCOG00086">
    <property type="taxonomic scope" value="Archaea"/>
</dbReference>
<dbReference type="HOGENOM" id="CLU_014340_1_2_2"/>
<dbReference type="UniPathway" id="UPA00035">
    <property type="reaction ID" value="UER00040"/>
</dbReference>
<dbReference type="Proteomes" id="UP000001169">
    <property type="component" value="Chromosome I"/>
</dbReference>
<dbReference type="GO" id="GO:0005829">
    <property type="term" value="C:cytosol"/>
    <property type="evidence" value="ECO:0007669"/>
    <property type="project" value="TreeGrafter"/>
</dbReference>
<dbReference type="GO" id="GO:0004049">
    <property type="term" value="F:anthranilate synthase activity"/>
    <property type="evidence" value="ECO:0007669"/>
    <property type="project" value="UniProtKB-EC"/>
</dbReference>
<dbReference type="GO" id="GO:0000162">
    <property type="term" value="P:L-tryptophan biosynthetic process"/>
    <property type="evidence" value="ECO:0007669"/>
    <property type="project" value="UniProtKB-UniPathway"/>
</dbReference>
<dbReference type="CDD" id="cd01743">
    <property type="entry name" value="GATase1_Anthranilate_Synthase"/>
    <property type="match status" value="1"/>
</dbReference>
<dbReference type="FunFam" id="3.40.50.880:FF:000003">
    <property type="entry name" value="Anthranilate synthase component II"/>
    <property type="match status" value="1"/>
</dbReference>
<dbReference type="Gene3D" id="3.40.50.880">
    <property type="match status" value="1"/>
</dbReference>
<dbReference type="InterPro" id="IPR050472">
    <property type="entry name" value="Anth_synth/Amidotransfase"/>
</dbReference>
<dbReference type="InterPro" id="IPR053448">
    <property type="entry name" value="AS_beta_subunit"/>
</dbReference>
<dbReference type="InterPro" id="IPR029062">
    <property type="entry name" value="Class_I_gatase-like"/>
</dbReference>
<dbReference type="InterPro" id="IPR017926">
    <property type="entry name" value="GATASE"/>
</dbReference>
<dbReference type="InterPro" id="IPR006221">
    <property type="entry name" value="TrpG/PapA_dom"/>
</dbReference>
<dbReference type="NCBIfam" id="NF041322">
    <property type="entry name" value="Anth_synII_Halo"/>
    <property type="match status" value="1"/>
</dbReference>
<dbReference type="NCBIfam" id="TIGR00566">
    <property type="entry name" value="trpG_papA"/>
    <property type="match status" value="1"/>
</dbReference>
<dbReference type="PANTHER" id="PTHR43418:SF4">
    <property type="entry name" value="MULTIFUNCTIONAL TRYPTOPHAN BIOSYNTHESIS PROTEIN"/>
    <property type="match status" value="1"/>
</dbReference>
<dbReference type="PANTHER" id="PTHR43418">
    <property type="entry name" value="MULTIFUNCTIONAL TRYPTOPHAN BIOSYNTHESIS PROTEIN-RELATED"/>
    <property type="match status" value="1"/>
</dbReference>
<dbReference type="Pfam" id="PF00117">
    <property type="entry name" value="GATase"/>
    <property type="match status" value="1"/>
</dbReference>
<dbReference type="PRINTS" id="PR00097">
    <property type="entry name" value="ANTSNTHASEII"/>
</dbReference>
<dbReference type="PRINTS" id="PR00099">
    <property type="entry name" value="CPSGATASE"/>
</dbReference>
<dbReference type="PRINTS" id="PR00096">
    <property type="entry name" value="GATASE"/>
</dbReference>
<dbReference type="SUPFAM" id="SSF52317">
    <property type="entry name" value="Class I glutamine amidotransferase-like"/>
    <property type="match status" value="1"/>
</dbReference>
<dbReference type="PROSITE" id="PS51273">
    <property type="entry name" value="GATASE_TYPE_1"/>
    <property type="match status" value="1"/>
</dbReference>
<accession>Q5V214</accession>
<evidence type="ECO:0000250" key="1"/>
<evidence type="ECO:0000250" key="2">
    <source>
        <dbReference type="UniProtKB" id="P00900"/>
    </source>
</evidence>
<evidence type="ECO:0000255" key="3">
    <source>
        <dbReference type="PROSITE-ProRule" id="PRU00605"/>
    </source>
</evidence>
<reference key="1">
    <citation type="journal article" date="2004" name="Genome Res.">
        <title>Genome sequence of Haloarcula marismortui: a halophilic archaeon from the Dead Sea.</title>
        <authorList>
            <person name="Baliga N.S."/>
            <person name="Bonneau R."/>
            <person name="Facciotti M.T."/>
            <person name="Pan M."/>
            <person name="Glusman G."/>
            <person name="Deutsch E.W."/>
            <person name="Shannon P."/>
            <person name="Chiu Y."/>
            <person name="Weng R.S."/>
            <person name="Gan R.R."/>
            <person name="Hung P."/>
            <person name="Date S.V."/>
            <person name="Marcotte E."/>
            <person name="Hood L."/>
            <person name="Ng W.V."/>
        </authorList>
    </citation>
    <scope>NUCLEOTIDE SEQUENCE [LARGE SCALE GENOMIC DNA]</scope>
    <source>
        <strain>ATCC 43049 / DSM 3752 / JCM 8966 / VKM B-1809</strain>
    </source>
</reference>
<gene>
    <name type="primary">trpG1</name>
    <name type="ordered locus">rrnAC1517</name>
</gene>
<sequence>MSTAQPAGADAVRDDLRVLFVDNFDSFTYNLVEYVSEHAETEVVRNTASLDDVEAFDPDAIILSPGPGHPKNERDVGVTLDVLREVSPDVPTLGVCLGLESAVYAYGGTIGRAPEPIHGKAFPIDHDGKGVFAGLEQGFQGGRYHSLIADDVPEEFVVSATTETEDGTELVMGVRHREHPIEAVQFHPESVLTAVGHDVIRNFLAGL</sequence>
<feature type="chain" id="PRO_0000056880" description="Anthranilate synthase component II">
    <location>
        <begin position="1"/>
        <end position="207"/>
    </location>
</feature>
<feature type="domain" description="Glutamine amidotransferase type-1" evidence="3">
    <location>
        <begin position="17"/>
        <end position="207"/>
    </location>
</feature>
<feature type="active site" description="Nucleophile; for GATase activity" evidence="3">
    <location>
        <position position="96"/>
    </location>
</feature>
<feature type="active site" evidence="3">
    <location>
        <position position="187"/>
    </location>
</feature>
<feature type="active site" evidence="3">
    <location>
        <position position="189"/>
    </location>
</feature>
<feature type="binding site" evidence="2">
    <location>
        <begin position="66"/>
        <end position="68"/>
    </location>
    <ligand>
        <name>L-glutamine</name>
        <dbReference type="ChEBI" id="CHEBI:58359"/>
    </ligand>
</feature>
<feature type="binding site" evidence="2">
    <location>
        <begin position="146"/>
        <end position="147"/>
    </location>
    <ligand>
        <name>L-glutamine</name>
        <dbReference type="ChEBI" id="CHEBI:58359"/>
    </ligand>
</feature>
<organism>
    <name type="scientific">Haloarcula marismortui (strain ATCC 43049 / DSM 3752 / JCM 8966 / VKM B-1809)</name>
    <name type="common">Halobacterium marismortui</name>
    <dbReference type="NCBI Taxonomy" id="272569"/>
    <lineage>
        <taxon>Archaea</taxon>
        <taxon>Methanobacteriati</taxon>
        <taxon>Methanobacteriota</taxon>
        <taxon>Stenosarchaea group</taxon>
        <taxon>Halobacteria</taxon>
        <taxon>Halobacteriales</taxon>
        <taxon>Haloarculaceae</taxon>
        <taxon>Haloarcula</taxon>
    </lineage>
</organism>
<keyword id="KW-0028">Amino-acid biosynthesis</keyword>
<keyword id="KW-0057">Aromatic amino acid biosynthesis</keyword>
<keyword id="KW-0315">Glutamine amidotransferase</keyword>
<keyword id="KW-0456">Lyase</keyword>
<keyword id="KW-1185">Reference proteome</keyword>
<keyword id="KW-0822">Tryptophan biosynthesis</keyword>